<accession>B2UUW8</accession>
<keyword id="KW-0963">Cytoplasm</keyword>
<keyword id="KW-0251">Elongation factor</keyword>
<keyword id="KW-0342">GTP-binding</keyword>
<keyword id="KW-0378">Hydrolase</keyword>
<keyword id="KW-0460">Magnesium</keyword>
<keyword id="KW-0479">Metal-binding</keyword>
<keyword id="KW-0547">Nucleotide-binding</keyword>
<keyword id="KW-0648">Protein biosynthesis</keyword>
<comment type="function">
    <text evidence="2">GTP hydrolase that promotes the GTP-dependent binding of aminoacyl-tRNA to the A-site of ribosomes during protein biosynthesis.</text>
</comment>
<comment type="catalytic activity">
    <reaction evidence="2">
        <text>GTP + H2O = GDP + phosphate + H(+)</text>
        <dbReference type="Rhea" id="RHEA:19669"/>
        <dbReference type="ChEBI" id="CHEBI:15377"/>
        <dbReference type="ChEBI" id="CHEBI:15378"/>
        <dbReference type="ChEBI" id="CHEBI:37565"/>
        <dbReference type="ChEBI" id="CHEBI:43474"/>
        <dbReference type="ChEBI" id="CHEBI:58189"/>
        <dbReference type="EC" id="3.6.5.3"/>
    </reaction>
    <physiologicalReaction direction="left-to-right" evidence="2">
        <dbReference type="Rhea" id="RHEA:19670"/>
    </physiologicalReaction>
</comment>
<comment type="subunit">
    <text evidence="2">Monomer.</text>
</comment>
<comment type="subcellular location">
    <subcellularLocation>
        <location evidence="2">Cytoplasm</location>
    </subcellularLocation>
</comment>
<comment type="similarity">
    <text evidence="2">Belongs to the TRAFAC class translation factor GTPase superfamily. Classic translation factor GTPase family. EF-Tu/EF-1A subfamily.</text>
</comment>
<organism>
    <name type="scientific">Helicobacter pylori (strain Shi470)</name>
    <dbReference type="NCBI Taxonomy" id="512562"/>
    <lineage>
        <taxon>Bacteria</taxon>
        <taxon>Pseudomonadati</taxon>
        <taxon>Campylobacterota</taxon>
        <taxon>Epsilonproteobacteria</taxon>
        <taxon>Campylobacterales</taxon>
        <taxon>Helicobacteraceae</taxon>
        <taxon>Helicobacter</taxon>
    </lineage>
</organism>
<protein>
    <recommendedName>
        <fullName evidence="2">Elongation factor Tu</fullName>
        <shortName evidence="2">EF-Tu</shortName>
        <ecNumber evidence="2">3.6.5.3</ecNumber>
    </recommendedName>
</protein>
<gene>
    <name evidence="2" type="primary">tuf</name>
    <name type="ordered locus">HPSH_06240</name>
</gene>
<proteinExistence type="inferred from homology"/>
<sequence>MAKEKFNRTKPHVNIGTIGHVDHGKTTLSAAISAVLSLKGLAEMKDYDNIDNAPEEKERGITIATSHIEYETENRHYAHVDCPGHADYVKNMITGAAQMDGAILVVSAADGPMPQTREHILLSRQVGVPHIVVFLNKQDMVDDQELLELVEMEVRELLSAYEFPGDDTPIVAGSALRALEEAKAGNVGEWGEKVLKLMAEVDAYIPTPERDTEKTFLMPVEDVFSIAGRGTVVTGRIERGVVKVGDEVEIVGIRATQKTTVTGVEMFRKELEKGEAGDNVGVLLRGTKKEEVERGMVLCKPGSITPHKKFEGEIYVLSKEEGGRHTPFFTNYRPQFYVRTTDVTGSITLPEGVEMVMPGDNVKITVELISPVALELGTKFAIREGGRTVGAGVVSNIIE</sequence>
<dbReference type="EC" id="3.6.5.3" evidence="2"/>
<dbReference type="EMBL" id="CP001072">
    <property type="protein sequence ID" value="ACD48650.1"/>
    <property type="molecule type" value="Genomic_DNA"/>
</dbReference>
<dbReference type="RefSeq" id="WP_001040578.1">
    <property type="nucleotide sequence ID" value="NC_010698.2"/>
</dbReference>
<dbReference type="SMR" id="B2UUW8"/>
<dbReference type="KEGG" id="hps:HPSH_06240"/>
<dbReference type="HOGENOM" id="CLU_007265_0_1_7"/>
<dbReference type="GO" id="GO:0005829">
    <property type="term" value="C:cytosol"/>
    <property type="evidence" value="ECO:0007669"/>
    <property type="project" value="TreeGrafter"/>
</dbReference>
<dbReference type="GO" id="GO:0005525">
    <property type="term" value="F:GTP binding"/>
    <property type="evidence" value="ECO:0007669"/>
    <property type="project" value="UniProtKB-UniRule"/>
</dbReference>
<dbReference type="GO" id="GO:0003924">
    <property type="term" value="F:GTPase activity"/>
    <property type="evidence" value="ECO:0007669"/>
    <property type="project" value="InterPro"/>
</dbReference>
<dbReference type="GO" id="GO:0003746">
    <property type="term" value="F:translation elongation factor activity"/>
    <property type="evidence" value="ECO:0007669"/>
    <property type="project" value="UniProtKB-UniRule"/>
</dbReference>
<dbReference type="CDD" id="cd01884">
    <property type="entry name" value="EF_Tu"/>
    <property type="match status" value="1"/>
</dbReference>
<dbReference type="CDD" id="cd03697">
    <property type="entry name" value="EFTU_II"/>
    <property type="match status" value="1"/>
</dbReference>
<dbReference type="CDD" id="cd03707">
    <property type="entry name" value="EFTU_III"/>
    <property type="match status" value="1"/>
</dbReference>
<dbReference type="FunFam" id="2.40.30.10:FF:000001">
    <property type="entry name" value="Elongation factor Tu"/>
    <property type="match status" value="1"/>
</dbReference>
<dbReference type="FunFam" id="3.40.50.300:FF:000003">
    <property type="entry name" value="Elongation factor Tu"/>
    <property type="match status" value="1"/>
</dbReference>
<dbReference type="Gene3D" id="3.40.50.300">
    <property type="entry name" value="P-loop containing nucleotide triphosphate hydrolases"/>
    <property type="match status" value="1"/>
</dbReference>
<dbReference type="Gene3D" id="2.40.30.10">
    <property type="entry name" value="Translation factors"/>
    <property type="match status" value="2"/>
</dbReference>
<dbReference type="HAMAP" id="MF_00118_B">
    <property type="entry name" value="EF_Tu_B"/>
    <property type="match status" value="1"/>
</dbReference>
<dbReference type="InterPro" id="IPR041709">
    <property type="entry name" value="EF-Tu_GTP-bd"/>
</dbReference>
<dbReference type="InterPro" id="IPR050055">
    <property type="entry name" value="EF-Tu_GTPase"/>
</dbReference>
<dbReference type="InterPro" id="IPR004161">
    <property type="entry name" value="EFTu-like_2"/>
</dbReference>
<dbReference type="InterPro" id="IPR033720">
    <property type="entry name" value="EFTU_2"/>
</dbReference>
<dbReference type="InterPro" id="IPR031157">
    <property type="entry name" value="G_TR_CS"/>
</dbReference>
<dbReference type="InterPro" id="IPR027417">
    <property type="entry name" value="P-loop_NTPase"/>
</dbReference>
<dbReference type="InterPro" id="IPR005225">
    <property type="entry name" value="Small_GTP-bd"/>
</dbReference>
<dbReference type="InterPro" id="IPR000795">
    <property type="entry name" value="T_Tr_GTP-bd_dom"/>
</dbReference>
<dbReference type="InterPro" id="IPR009000">
    <property type="entry name" value="Transl_B-barrel_sf"/>
</dbReference>
<dbReference type="InterPro" id="IPR009001">
    <property type="entry name" value="Transl_elong_EF1A/Init_IF2_C"/>
</dbReference>
<dbReference type="InterPro" id="IPR004541">
    <property type="entry name" value="Transl_elong_EFTu/EF1A_bac/org"/>
</dbReference>
<dbReference type="InterPro" id="IPR004160">
    <property type="entry name" value="Transl_elong_EFTu/EF1A_C"/>
</dbReference>
<dbReference type="NCBIfam" id="TIGR00485">
    <property type="entry name" value="EF-Tu"/>
    <property type="match status" value="1"/>
</dbReference>
<dbReference type="NCBIfam" id="NF000766">
    <property type="entry name" value="PRK00049.1"/>
    <property type="match status" value="1"/>
</dbReference>
<dbReference type="NCBIfam" id="NF009372">
    <property type="entry name" value="PRK12735.1"/>
    <property type="match status" value="1"/>
</dbReference>
<dbReference type="NCBIfam" id="NF009373">
    <property type="entry name" value="PRK12736.1"/>
    <property type="match status" value="1"/>
</dbReference>
<dbReference type="NCBIfam" id="TIGR00231">
    <property type="entry name" value="small_GTP"/>
    <property type="match status" value="1"/>
</dbReference>
<dbReference type="PANTHER" id="PTHR43721:SF22">
    <property type="entry name" value="ELONGATION FACTOR TU, MITOCHONDRIAL"/>
    <property type="match status" value="1"/>
</dbReference>
<dbReference type="PANTHER" id="PTHR43721">
    <property type="entry name" value="ELONGATION FACTOR TU-RELATED"/>
    <property type="match status" value="1"/>
</dbReference>
<dbReference type="Pfam" id="PF00009">
    <property type="entry name" value="GTP_EFTU"/>
    <property type="match status" value="1"/>
</dbReference>
<dbReference type="Pfam" id="PF03144">
    <property type="entry name" value="GTP_EFTU_D2"/>
    <property type="match status" value="1"/>
</dbReference>
<dbReference type="Pfam" id="PF03143">
    <property type="entry name" value="GTP_EFTU_D3"/>
    <property type="match status" value="1"/>
</dbReference>
<dbReference type="PRINTS" id="PR00315">
    <property type="entry name" value="ELONGATNFCT"/>
</dbReference>
<dbReference type="SUPFAM" id="SSF50465">
    <property type="entry name" value="EF-Tu/eEF-1alpha/eIF2-gamma C-terminal domain"/>
    <property type="match status" value="1"/>
</dbReference>
<dbReference type="SUPFAM" id="SSF52540">
    <property type="entry name" value="P-loop containing nucleoside triphosphate hydrolases"/>
    <property type="match status" value="1"/>
</dbReference>
<dbReference type="SUPFAM" id="SSF50447">
    <property type="entry name" value="Translation proteins"/>
    <property type="match status" value="1"/>
</dbReference>
<dbReference type="PROSITE" id="PS00301">
    <property type="entry name" value="G_TR_1"/>
    <property type="match status" value="1"/>
</dbReference>
<dbReference type="PROSITE" id="PS51722">
    <property type="entry name" value="G_TR_2"/>
    <property type="match status" value="1"/>
</dbReference>
<feature type="chain" id="PRO_1000095067" description="Elongation factor Tu">
    <location>
        <begin position="1"/>
        <end position="399"/>
    </location>
</feature>
<feature type="domain" description="tr-type G">
    <location>
        <begin position="10"/>
        <end position="209"/>
    </location>
</feature>
<feature type="region of interest" description="G1" evidence="1">
    <location>
        <begin position="19"/>
        <end position="26"/>
    </location>
</feature>
<feature type="region of interest" description="G2" evidence="1">
    <location>
        <begin position="60"/>
        <end position="64"/>
    </location>
</feature>
<feature type="region of interest" description="G3" evidence="1">
    <location>
        <begin position="81"/>
        <end position="84"/>
    </location>
</feature>
<feature type="region of interest" description="G4" evidence="1">
    <location>
        <begin position="136"/>
        <end position="139"/>
    </location>
</feature>
<feature type="region of interest" description="G5" evidence="1">
    <location>
        <begin position="174"/>
        <end position="176"/>
    </location>
</feature>
<feature type="binding site" evidence="2">
    <location>
        <begin position="19"/>
        <end position="26"/>
    </location>
    <ligand>
        <name>GTP</name>
        <dbReference type="ChEBI" id="CHEBI:37565"/>
    </ligand>
</feature>
<feature type="binding site" evidence="2">
    <location>
        <position position="26"/>
    </location>
    <ligand>
        <name>Mg(2+)</name>
        <dbReference type="ChEBI" id="CHEBI:18420"/>
    </ligand>
</feature>
<feature type="binding site" evidence="2">
    <location>
        <begin position="81"/>
        <end position="85"/>
    </location>
    <ligand>
        <name>GTP</name>
        <dbReference type="ChEBI" id="CHEBI:37565"/>
    </ligand>
</feature>
<feature type="binding site" evidence="2">
    <location>
        <begin position="136"/>
        <end position="139"/>
    </location>
    <ligand>
        <name>GTP</name>
        <dbReference type="ChEBI" id="CHEBI:37565"/>
    </ligand>
</feature>
<evidence type="ECO:0000250" key="1"/>
<evidence type="ECO:0000255" key="2">
    <source>
        <dbReference type="HAMAP-Rule" id="MF_00118"/>
    </source>
</evidence>
<name>EFTU_HELPS</name>
<reference key="1">
    <citation type="submission" date="2008-05" db="EMBL/GenBank/DDBJ databases">
        <title>Genome sequence of Helicobacter pylori from the remote Amazon: traces of Asian ancestry of the first Americans.</title>
        <authorList>
            <person name="Kersulyte D."/>
            <person name="Kalia A."/>
            <person name="Gilman R.H."/>
            <person name="Berg D.E."/>
        </authorList>
    </citation>
    <scope>NUCLEOTIDE SEQUENCE [LARGE SCALE GENOMIC DNA]</scope>
    <source>
        <strain>Shi470</strain>
    </source>
</reference>